<sequence length="456" mass="50326">MGQTLFDKVWNRHVLYGKLGEPQLLYIDLHLIHEVTSPQAFEGLRLQNRKLRRPDLTFATLDHNVPTIDIFNIKDEIANKQITTLQKNAIDFGVHIFDMGSDEQGIVHMVGPETGLTQPGKTIVCGDSHTATHGAFGAIAFGIGTSEVEHVFATQTLWQTKPKNLKIDINGTLPTGVYAKDIILHLIKTYGVDFGTGYALEFTGETIKNLSMDGRMTICNMAIEGGAKYGIIQPDDITFEYVKGRPFADNFAKSVDKWRELYSDDDAIFDRVIELDVSTLEPQVTWGTNPEMGVNFSEPFPEINDINDQRAYDYMGLEPGQKAEDIDLGYVFLGSCTNARLSDLIEASHIVKGNKVHPNITAIVVPGSRTVKKEAEKLGLDTIFKNAGFEWREPGCSMCLGMNPDQVPEGVHCASTSNRNFEGRQGKGARTHLVSPAMAAAAAIHGKFVDVRKVVV</sequence>
<evidence type="ECO:0000255" key="1">
    <source>
        <dbReference type="HAMAP-Rule" id="MF_01026"/>
    </source>
</evidence>
<keyword id="KW-0004">4Fe-4S</keyword>
<keyword id="KW-0028">Amino-acid biosynthesis</keyword>
<keyword id="KW-0100">Branched-chain amino acid biosynthesis</keyword>
<keyword id="KW-0408">Iron</keyword>
<keyword id="KW-0411">Iron-sulfur</keyword>
<keyword id="KW-0432">Leucine biosynthesis</keyword>
<keyword id="KW-0456">Lyase</keyword>
<keyword id="KW-0479">Metal-binding</keyword>
<comment type="function">
    <text evidence="1">Catalyzes the isomerization between 2-isopropylmalate and 3-isopropylmalate, via the formation of 2-isopropylmaleate.</text>
</comment>
<comment type="catalytic activity">
    <reaction evidence="1">
        <text>(2R,3S)-3-isopropylmalate = (2S)-2-isopropylmalate</text>
        <dbReference type="Rhea" id="RHEA:32287"/>
        <dbReference type="ChEBI" id="CHEBI:1178"/>
        <dbReference type="ChEBI" id="CHEBI:35121"/>
        <dbReference type="EC" id="4.2.1.33"/>
    </reaction>
</comment>
<comment type="cofactor">
    <cofactor evidence="1">
        <name>[4Fe-4S] cluster</name>
        <dbReference type="ChEBI" id="CHEBI:49883"/>
    </cofactor>
    <text evidence="1">Binds 1 [4Fe-4S] cluster per subunit.</text>
</comment>
<comment type="pathway">
    <text evidence="1">Amino-acid biosynthesis; L-leucine biosynthesis; L-leucine from 3-methyl-2-oxobutanoate: step 2/4.</text>
</comment>
<comment type="subunit">
    <text evidence="1">Heterodimer of LeuC and LeuD.</text>
</comment>
<comment type="similarity">
    <text evidence="1">Belongs to the aconitase/IPM isomerase family. LeuC type 1 subfamily.</text>
</comment>
<dbReference type="EC" id="4.2.1.33" evidence="1"/>
<dbReference type="EMBL" id="BA000018">
    <property type="protein sequence ID" value="BAB43146.1"/>
    <property type="molecule type" value="Genomic_DNA"/>
</dbReference>
<dbReference type="PIR" id="A89998">
    <property type="entry name" value="A89998"/>
</dbReference>
<dbReference type="RefSeq" id="WP_000531823.1">
    <property type="nucleotide sequence ID" value="NC_002745.2"/>
</dbReference>
<dbReference type="SMR" id="P63436"/>
<dbReference type="EnsemblBacteria" id="BAB43146">
    <property type="protein sequence ID" value="BAB43146"/>
    <property type="gene ID" value="BAB43146"/>
</dbReference>
<dbReference type="KEGG" id="sau:SA1864"/>
<dbReference type="HOGENOM" id="CLU_006714_3_4_9"/>
<dbReference type="UniPathway" id="UPA00048">
    <property type="reaction ID" value="UER00071"/>
</dbReference>
<dbReference type="GO" id="GO:0003861">
    <property type="term" value="F:3-isopropylmalate dehydratase activity"/>
    <property type="evidence" value="ECO:0007669"/>
    <property type="project" value="UniProtKB-UniRule"/>
</dbReference>
<dbReference type="GO" id="GO:0051539">
    <property type="term" value="F:4 iron, 4 sulfur cluster binding"/>
    <property type="evidence" value="ECO:0007669"/>
    <property type="project" value="UniProtKB-KW"/>
</dbReference>
<dbReference type="GO" id="GO:0046872">
    <property type="term" value="F:metal ion binding"/>
    <property type="evidence" value="ECO:0007669"/>
    <property type="project" value="UniProtKB-KW"/>
</dbReference>
<dbReference type="GO" id="GO:0009098">
    <property type="term" value="P:L-leucine biosynthetic process"/>
    <property type="evidence" value="ECO:0007669"/>
    <property type="project" value="UniProtKB-UniRule"/>
</dbReference>
<dbReference type="CDD" id="cd01583">
    <property type="entry name" value="IPMI"/>
    <property type="match status" value="1"/>
</dbReference>
<dbReference type="Gene3D" id="3.30.499.10">
    <property type="entry name" value="Aconitase, domain 3"/>
    <property type="match status" value="2"/>
</dbReference>
<dbReference type="HAMAP" id="MF_01026">
    <property type="entry name" value="LeuC_type1"/>
    <property type="match status" value="1"/>
</dbReference>
<dbReference type="InterPro" id="IPR004430">
    <property type="entry name" value="3-IsopropMal_deHydase_lsu"/>
</dbReference>
<dbReference type="InterPro" id="IPR015931">
    <property type="entry name" value="Acnase/IPM_dHydase_lsu_aba_1/3"/>
</dbReference>
<dbReference type="InterPro" id="IPR001030">
    <property type="entry name" value="Acoase/IPM_deHydtase_lsu_aba"/>
</dbReference>
<dbReference type="InterPro" id="IPR018136">
    <property type="entry name" value="Aconitase_4Fe-4S_BS"/>
</dbReference>
<dbReference type="InterPro" id="IPR036008">
    <property type="entry name" value="Aconitase_4Fe-4S_dom"/>
</dbReference>
<dbReference type="InterPro" id="IPR050067">
    <property type="entry name" value="IPM_dehydratase_rel_enz"/>
</dbReference>
<dbReference type="InterPro" id="IPR033941">
    <property type="entry name" value="IPMI_cat"/>
</dbReference>
<dbReference type="NCBIfam" id="TIGR00170">
    <property type="entry name" value="leuC"/>
    <property type="match status" value="1"/>
</dbReference>
<dbReference type="NCBIfam" id="NF004016">
    <property type="entry name" value="PRK05478.1"/>
    <property type="match status" value="1"/>
</dbReference>
<dbReference type="NCBIfam" id="NF009116">
    <property type="entry name" value="PRK12466.1"/>
    <property type="match status" value="1"/>
</dbReference>
<dbReference type="PANTHER" id="PTHR43822:SF9">
    <property type="entry name" value="3-ISOPROPYLMALATE DEHYDRATASE"/>
    <property type="match status" value="1"/>
</dbReference>
<dbReference type="PANTHER" id="PTHR43822">
    <property type="entry name" value="HOMOACONITASE, MITOCHONDRIAL-RELATED"/>
    <property type="match status" value="1"/>
</dbReference>
<dbReference type="Pfam" id="PF00330">
    <property type="entry name" value="Aconitase"/>
    <property type="match status" value="1"/>
</dbReference>
<dbReference type="PRINTS" id="PR00415">
    <property type="entry name" value="ACONITASE"/>
</dbReference>
<dbReference type="SUPFAM" id="SSF53732">
    <property type="entry name" value="Aconitase iron-sulfur domain"/>
    <property type="match status" value="1"/>
</dbReference>
<dbReference type="PROSITE" id="PS00450">
    <property type="entry name" value="ACONITASE_1"/>
    <property type="match status" value="1"/>
</dbReference>
<dbReference type="PROSITE" id="PS01244">
    <property type="entry name" value="ACONITASE_2"/>
    <property type="match status" value="1"/>
</dbReference>
<accession>P63436</accession>
<accession>Q99SJ3</accession>
<reference key="1">
    <citation type="journal article" date="2001" name="Lancet">
        <title>Whole genome sequencing of meticillin-resistant Staphylococcus aureus.</title>
        <authorList>
            <person name="Kuroda M."/>
            <person name="Ohta T."/>
            <person name="Uchiyama I."/>
            <person name="Baba T."/>
            <person name="Yuzawa H."/>
            <person name="Kobayashi I."/>
            <person name="Cui L."/>
            <person name="Oguchi A."/>
            <person name="Aoki K."/>
            <person name="Nagai Y."/>
            <person name="Lian J.-Q."/>
            <person name="Ito T."/>
            <person name="Kanamori M."/>
            <person name="Matsumaru H."/>
            <person name="Maruyama A."/>
            <person name="Murakami H."/>
            <person name="Hosoyama A."/>
            <person name="Mizutani-Ui Y."/>
            <person name="Takahashi N.K."/>
            <person name="Sawano T."/>
            <person name="Inoue R."/>
            <person name="Kaito C."/>
            <person name="Sekimizu K."/>
            <person name="Hirakawa H."/>
            <person name="Kuhara S."/>
            <person name="Goto S."/>
            <person name="Yabuzaki J."/>
            <person name="Kanehisa M."/>
            <person name="Yamashita A."/>
            <person name="Oshima K."/>
            <person name="Furuya K."/>
            <person name="Yoshino C."/>
            <person name="Shiba T."/>
            <person name="Hattori M."/>
            <person name="Ogasawara N."/>
            <person name="Hayashi H."/>
            <person name="Hiramatsu K."/>
        </authorList>
    </citation>
    <scope>NUCLEOTIDE SEQUENCE [LARGE SCALE GENOMIC DNA]</scope>
    <source>
        <strain>N315</strain>
    </source>
</reference>
<name>LEUC_STAAN</name>
<gene>
    <name evidence="1" type="primary">leuC</name>
    <name type="ordered locus">SA1864</name>
</gene>
<protein>
    <recommendedName>
        <fullName evidence="1">3-isopropylmalate dehydratase large subunit</fullName>
        <ecNumber evidence="1">4.2.1.33</ecNumber>
    </recommendedName>
    <alternativeName>
        <fullName evidence="1">Alpha-IPM isomerase</fullName>
        <shortName evidence="1">IPMI</shortName>
    </alternativeName>
    <alternativeName>
        <fullName evidence="1">Isopropylmalate isomerase</fullName>
    </alternativeName>
</protein>
<organism>
    <name type="scientific">Staphylococcus aureus (strain N315)</name>
    <dbReference type="NCBI Taxonomy" id="158879"/>
    <lineage>
        <taxon>Bacteria</taxon>
        <taxon>Bacillati</taxon>
        <taxon>Bacillota</taxon>
        <taxon>Bacilli</taxon>
        <taxon>Bacillales</taxon>
        <taxon>Staphylococcaceae</taxon>
        <taxon>Staphylococcus</taxon>
    </lineage>
</organism>
<feature type="chain" id="PRO_0000076816" description="3-isopropylmalate dehydratase large subunit">
    <location>
        <begin position="1"/>
        <end position="456"/>
    </location>
</feature>
<feature type="binding site" evidence="1">
    <location>
        <position position="336"/>
    </location>
    <ligand>
        <name>[4Fe-4S] cluster</name>
        <dbReference type="ChEBI" id="CHEBI:49883"/>
    </ligand>
</feature>
<feature type="binding site" evidence="1">
    <location>
        <position position="396"/>
    </location>
    <ligand>
        <name>[4Fe-4S] cluster</name>
        <dbReference type="ChEBI" id="CHEBI:49883"/>
    </ligand>
</feature>
<feature type="binding site" evidence="1">
    <location>
        <position position="399"/>
    </location>
    <ligand>
        <name>[4Fe-4S] cluster</name>
        <dbReference type="ChEBI" id="CHEBI:49883"/>
    </ligand>
</feature>
<proteinExistence type="inferred from homology"/>